<organism>
    <name type="scientific">Pseudomonas aeruginosa (strain UCBPP-PA14)</name>
    <dbReference type="NCBI Taxonomy" id="208963"/>
    <lineage>
        <taxon>Bacteria</taxon>
        <taxon>Pseudomonadati</taxon>
        <taxon>Pseudomonadota</taxon>
        <taxon>Gammaproteobacteria</taxon>
        <taxon>Pseudomonadales</taxon>
        <taxon>Pseudomonadaceae</taxon>
        <taxon>Pseudomonas</taxon>
    </lineage>
</organism>
<evidence type="ECO:0000255" key="1">
    <source>
        <dbReference type="HAMAP-Rule" id="MF_01428"/>
    </source>
</evidence>
<proteinExistence type="inferred from homology"/>
<keyword id="KW-0030">Aminoacyl-tRNA synthetase</keyword>
<keyword id="KW-0067">ATP-binding</keyword>
<keyword id="KW-0436">Ligase</keyword>
<keyword id="KW-0479">Metal-binding</keyword>
<keyword id="KW-0547">Nucleotide-binding</keyword>
<keyword id="KW-0862">Zinc</keyword>
<protein>
    <recommendedName>
        <fullName evidence="1">Glutamyl-Q tRNA(Asp) synthetase</fullName>
        <shortName evidence="1">Glu-Q-RSs</shortName>
        <ecNumber evidence="1">6.1.1.-</ecNumber>
    </recommendedName>
</protein>
<name>GLUQ_PSEAB</name>
<sequence>MTSSYVGRFAPTPSGYLHFGSLVAAVASYLDARAVGGRWLVRMEDLDPPREVPGAQQAILETLERYGFEWDGAVERQSERFPAYAAVVEQLLRSGLAYACTCSRKQLEGFAGIYPGFCRDAGHAREDAAIRLRVPELEYRFVDRVQGEVRQHLGREVGDFVIQRRDGFYAYQLAVVLDDAWQGITDIVRGADLLDSTPRQLYLQELLGLSQPRYLHVPLIVQPDGHKLGKSYRSPPLPAEQAAAPLTRALRALGQRPPAELAQASASEALAWGVAHWDATRIPRCATLPEERL</sequence>
<reference key="1">
    <citation type="journal article" date="2006" name="Genome Biol.">
        <title>Genomic analysis reveals that Pseudomonas aeruginosa virulence is combinatorial.</title>
        <authorList>
            <person name="Lee D.G."/>
            <person name="Urbach J.M."/>
            <person name="Wu G."/>
            <person name="Liberati N.T."/>
            <person name="Feinbaum R.L."/>
            <person name="Miyata S."/>
            <person name="Diggins L.T."/>
            <person name="He J."/>
            <person name="Saucier M."/>
            <person name="Deziel E."/>
            <person name="Friedman L."/>
            <person name="Li L."/>
            <person name="Grills G."/>
            <person name="Montgomery K."/>
            <person name="Kucherlapati R."/>
            <person name="Rahme L.G."/>
            <person name="Ausubel F.M."/>
        </authorList>
    </citation>
    <scope>NUCLEOTIDE SEQUENCE [LARGE SCALE GENOMIC DNA]</scope>
    <source>
        <strain>UCBPP-PA14</strain>
    </source>
</reference>
<feature type="chain" id="PRO_1000024362" description="Glutamyl-Q tRNA(Asp) synthetase">
    <location>
        <begin position="1"/>
        <end position="293"/>
    </location>
</feature>
<feature type="short sequence motif" description="'HIGH' region">
    <location>
        <begin position="11"/>
        <end position="21"/>
    </location>
</feature>
<feature type="short sequence motif" description="'KMSKS' region">
    <location>
        <begin position="227"/>
        <end position="231"/>
    </location>
</feature>
<feature type="binding site" evidence="1">
    <location>
        <begin position="8"/>
        <end position="12"/>
    </location>
    <ligand>
        <name>L-glutamate</name>
        <dbReference type="ChEBI" id="CHEBI:29985"/>
    </ligand>
</feature>
<feature type="binding site" evidence="1">
    <location>
        <position position="44"/>
    </location>
    <ligand>
        <name>L-glutamate</name>
        <dbReference type="ChEBI" id="CHEBI:29985"/>
    </ligand>
</feature>
<feature type="binding site" evidence="1">
    <location>
        <position position="100"/>
    </location>
    <ligand>
        <name>Zn(2+)</name>
        <dbReference type="ChEBI" id="CHEBI:29105"/>
    </ligand>
</feature>
<feature type="binding site" evidence="1">
    <location>
        <position position="102"/>
    </location>
    <ligand>
        <name>Zn(2+)</name>
        <dbReference type="ChEBI" id="CHEBI:29105"/>
    </ligand>
</feature>
<feature type="binding site" evidence="1">
    <location>
        <position position="114"/>
    </location>
    <ligand>
        <name>Zn(2+)</name>
        <dbReference type="ChEBI" id="CHEBI:29105"/>
    </ligand>
</feature>
<feature type="binding site" evidence="1">
    <location>
        <position position="118"/>
    </location>
    <ligand>
        <name>Zn(2+)</name>
        <dbReference type="ChEBI" id="CHEBI:29105"/>
    </ligand>
</feature>
<feature type="binding site" evidence="1">
    <location>
        <position position="171"/>
    </location>
    <ligand>
        <name>L-glutamate</name>
        <dbReference type="ChEBI" id="CHEBI:29985"/>
    </ligand>
</feature>
<feature type="binding site" evidence="1">
    <location>
        <position position="189"/>
    </location>
    <ligand>
        <name>L-glutamate</name>
        <dbReference type="ChEBI" id="CHEBI:29985"/>
    </ligand>
</feature>
<feature type="binding site" evidence="1">
    <location>
        <position position="230"/>
    </location>
    <ligand>
        <name>ATP</name>
        <dbReference type="ChEBI" id="CHEBI:30616"/>
    </ligand>
</feature>
<gene>
    <name evidence="1" type="primary">gluQ</name>
    <name type="ordered locus">PA14_62510</name>
</gene>
<accession>Q02FU9</accession>
<dbReference type="EC" id="6.1.1.-" evidence="1"/>
<dbReference type="EMBL" id="CP000438">
    <property type="protein sequence ID" value="ABJ14106.1"/>
    <property type="molecule type" value="Genomic_DNA"/>
</dbReference>
<dbReference type="SMR" id="Q02FU9"/>
<dbReference type="KEGG" id="pau:PA14_62510"/>
<dbReference type="PseudoCAP" id="PA14_62510"/>
<dbReference type="HOGENOM" id="CLU_015768_0_1_6"/>
<dbReference type="BioCyc" id="PAER208963:G1G74-5285-MONOMER"/>
<dbReference type="Proteomes" id="UP000000653">
    <property type="component" value="Chromosome"/>
</dbReference>
<dbReference type="GO" id="GO:0005829">
    <property type="term" value="C:cytosol"/>
    <property type="evidence" value="ECO:0007669"/>
    <property type="project" value="TreeGrafter"/>
</dbReference>
<dbReference type="GO" id="GO:0005524">
    <property type="term" value="F:ATP binding"/>
    <property type="evidence" value="ECO:0007669"/>
    <property type="project" value="UniProtKB-KW"/>
</dbReference>
<dbReference type="GO" id="GO:0004818">
    <property type="term" value="F:glutamate-tRNA ligase activity"/>
    <property type="evidence" value="ECO:0007669"/>
    <property type="project" value="TreeGrafter"/>
</dbReference>
<dbReference type="GO" id="GO:0008270">
    <property type="term" value="F:zinc ion binding"/>
    <property type="evidence" value="ECO:0007669"/>
    <property type="project" value="UniProtKB-UniRule"/>
</dbReference>
<dbReference type="GO" id="GO:0006424">
    <property type="term" value="P:glutamyl-tRNA aminoacylation"/>
    <property type="evidence" value="ECO:0007669"/>
    <property type="project" value="InterPro"/>
</dbReference>
<dbReference type="GO" id="GO:0006400">
    <property type="term" value="P:tRNA modification"/>
    <property type="evidence" value="ECO:0007669"/>
    <property type="project" value="InterPro"/>
</dbReference>
<dbReference type="FunFam" id="3.40.50.620:FF:000093">
    <property type="entry name" value="Glutamyl-Q tRNA(Asp) synthetase"/>
    <property type="match status" value="1"/>
</dbReference>
<dbReference type="Gene3D" id="3.40.50.620">
    <property type="entry name" value="HUPs"/>
    <property type="match status" value="1"/>
</dbReference>
<dbReference type="HAMAP" id="MF_01428">
    <property type="entry name" value="Glu_Q_tRNA_synth"/>
    <property type="match status" value="1"/>
</dbReference>
<dbReference type="InterPro" id="IPR022380">
    <property type="entry name" value="Glu-Q_tRNA(Asp)_Synthase"/>
</dbReference>
<dbReference type="InterPro" id="IPR000924">
    <property type="entry name" value="Glu/Gln-tRNA-synth"/>
</dbReference>
<dbReference type="InterPro" id="IPR020058">
    <property type="entry name" value="Glu/Gln-tRNA-synth_Ib_cat-dom"/>
</dbReference>
<dbReference type="InterPro" id="IPR049940">
    <property type="entry name" value="GluQ/Sye"/>
</dbReference>
<dbReference type="InterPro" id="IPR014729">
    <property type="entry name" value="Rossmann-like_a/b/a_fold"/>
</dbReference>
<dbReference type="NCBIfam" id="NF004314">
    <property type="entry name" value="PRK05710.1-3"/>
    <property type="match status" value="1"/>
</dbReference>
<dbReference type="NCBIfam" id="TIGR03838">
    <property type="entry name" value="queuosine_YadB"/>
    <property type="match status" value="1"/>
</dbReference>
<dbReference type="PANTHER" id="PTHR43311">
    <property type="entry name" value="GLUTAMATE--TRNA LIGASE"/>
    <property type="match status" value="1"/>
</dbReference>
<dbReference type="PANTHER" id="PTHR43311:SF1">
    <property type="entry name" value="GLUTAMYL-Q TRNA(ASP) SYNTHETASE"/>
    <property type="match status" value="1"/>
</dbReference>
<dbReference type="Pfam" id="PF00749">
    <property type="entry name" value="tRNA-synt_1c"/>
    <property type="match status" value="2"/>
</dbReference>
<dbReference type="PRINTS" id="PR00987">
    <property type="entry name" value="TRNASYNTHGLU"/>
</dbReference>
<dbReference type="SUPFAM" id="SSF52374">
    <property type="entry name" value="Nucleotidylyl transferase"/>
    <property type="match status" value="1"/>
</dbReference>
<comment type="function">
    <text evidence="1">Catalyzes the tRNA-independent activation of glutamate in presence of ATP and the subsequent transfer of glutamate onto a tRNA(Asp). Glutamate is transferred on the 2-amino-5-(4,5-dihydroxy-2-cyclopenten-1-yl) moiety of the queuosine in the wobble position of the QUC anticodon.</text>
</comment>
<comment type="cofactor">
    <cofactor evidence="1">
        <name>Zn(2+)</name>
        <dbReference type="ChEBI" id="CHEBI:29105"/>
    </cofactor>
    <text evidence="1">Binds 1 zinc ion per subunit.</text>
</comment>
<comment type="similarity">
    <text evidence="1">Belongs to the class-I aminoacyl-tRNA synthetase family. GluQ subfamily.</text>
</comment>